<dbReference type="EC" id="2.7.8.13" evidence="1"/>
<dbReference type="EMBL" id="AP009324">
    <property type="protein sequence ID" value="BAF78055.1"/>
    <property type="molecule type" value="Genomic_DNA"/>
</dbReference>
<dbReference type="RefSeq" id="WP_000578458.1">
    <property type="nucleotide sequence ID" value="NZ_CTYB01000010.1"/>
</dbReference>
<dbReference type="SMR" id="A7X1C2"/>
<dbReference type="KEGG" id="saw:SAHV_1172"/>
<dbReference type="HOGENOM" id="CLU_023982_0_1_9"/>
<dbReference type="UniPathway" id="UPA00219"/>
<dbReference type="GO" id="GO:0005886">
    <property type="term" value="C:plasma membrane"/>
    <property type="evidence" value="ECO:0007669"/>
    <property type="project" value="UniProtKB-SubCell"/>
</dbReference>
<dbReference type="GO" id="GO:0046872">
    <property type="term" value="F:metal ion binding"/>
    <property type="evidence" value="ECO:0007669"/>
    <property type="project" value="UniProtKB-KW"/>
</dbReference>
<dbReference type="GO" id="GO:0008963">
    <property type="term" value="F:phospho-N-acetylmuramoyl-pentapeptide-transferase activity"/>
    <property type="evidence" value="ECO:0007669"/>
    <property type="project" value="UniProtKB-UniRule"/>
</dbReference>
<dbReference type="GO" id="GO:0051301">
    <property type="term" value="P:cell division"/>
    <property type="evidence" value="ECO:0007669"/>
    <property type="project" value="UniProtKB-KW"/>
</dbReference>
<dbReference type="GO" id="GO:0071555">
    <property type="term" value="P:cell wall organization"/>
    <property type="evidence" value="ECO:0007669"/>
    <property type="project" value="UniProtKB-KW"/>
</dbReference>
<dbReference type="GO" id="GO:0009252">
    <property type="term" value="P:peptidoglycan biosynthetic process"/>
    <property type="evidence" value="ECO:0007669"/>
    <property type="project" value="UniProtKB-UniRule"/>
</dbReference>
<dbReference type="GO" id="GO:0008360">
    <property type="term" value="P:regulation of cell shape"/>
    <property type="evidence" value="ECO:0007669"/>
    <property type="project" value="UniProtKB-KW"/>
</dbReference>
<dbReference type="CDD" id="cd06852">
    <property type="entry name" value="GT_MraY"/>
    <property type="match status" value="1"/>
</dbReference>
<dbReference type="HAMAP" id="MF_00038">
    <property type="entry name" value="MraY"/>
    <property type="match status" value="1"/>
</dbReference>
<dbReference type="InterPro" id="IPR000715">
    <property type="entry name" value="Glycosyl_transferase_4"/>
</dbReference>
<dbReference type="InterPro" id="IPR003524">
    <property type="entry name" value="PNAcMuramoyl-5peptid_Trfase"/>
</dbReference>
<dbReference type="InterPro" id="IPR018480">
    <property type="entry name" value="PNAcMuramoyl-5peptid_Trfase_CS"/>
</dbReference>
<dbReference type="NCBIfam" id="TIGR00445">
    <property type="entry name" value="mraY"/>
    <property type="match status" value="1"/>
</dbReference>
<dbReference type="PANTHER" id="PTHR22926">
    <property type="entry name" value="PHOSPHO-N-ACETYLMURAMOYL-PENTAPEPTIDE-TRANSFERASE"/>
    <property type="match status" value="1"/>
</dbReference>
<dbReference type="PANTHER" id="PTHR22926:SF5">
    <property type="entry name" value="PHOSPHO-N-ACETYLMURAMOYL-PENTAPEPTIDE-TRANSFERASE HOMOLOG"/>
    <property type="match status" value="1"/>
</dbReference>
<dbReference type="Pfam" id="PF00953">
    <property type="entry name" value="Glycos_transf_4"/>
    <property type="match status" value="1"/>
</dbReference>
<dbReference type="PROSITE" id="PS01347">
    <property type="entry name" value="MRAY_1"/>
    <property type="match status" value="1"/>
</dbReference>
<dbReference type="PROSITE" id="PS01348">
    <property type="entry name" value="MRAY_2"/>
    <property type="match status" value="1"/>
</dbReference>
<sequence>MIFVYALLALVITFVLVPVLIPTLKRMKFGQSIREEGPQSHMKKTGTPTMGGLTFLLSIVITSLVAIIFVDQANPIILLLFVTIGFGLIGFIDDYIIVVKKNNQGLTSKQKFLAQIGIAIIFFVLSNVFHLVNFSTSIHIPFTNVAIPLSFAYVIFIVFWQVGFSNAVNLTDGLDGLATGLSIIGFTMYAIMSFVLGETAIGIFCIIMLFALLGFLPYNINPAKVFMGDTGSLALGGIFATISIMLNQELSLIFIGLVFVIETLSVMLQVASFKLTGKRIFKMSPIHHHFELIGWSEWKVVTVFWAVGLISGLIGLWIGVH</sequence>
<evidence type="ECO:0000255" key="1">
    <source>
        <dbReference type="HAMAP-Rule" id="MF_00038"/>
    </source>
</evidence>
<proteinExistence type="inferred from homology"/>
<gene>
    <name evidence="1" type="primary">mraY</name>
    <name type="ordered locus">SAHV_1172</name>
</gene>
<accession>A7X1C2</accession>
<organism>
    <name type="scientific">Staphylococcus aureus (strain Mu3 / ATCC 700698)</name>
    <dbReference type="NCBI Taxonomy" id="418127"/>
    <lineage>
        <taxon>Bacteria</taxon>
        <taxon>Bacillati</taxon>
        <taxon>Bacillota</taxon>
        <taxon>Bacilli</taxon>
        <taxon>Bacillales</taxon>
        <taxon>Staphylococcaceae</taxon>
        <taxon>Staphylococcus</taxon>
    </lineage>
</organism>
<reference key="1">
    <citation type="journal article" date="2008" name="Antimicrob. Agents Chemother.">
        <title>Mutated response regulator graR is responsible for phenotypic conversion of Staphylococcus aureus from heterogeneous vancomycin-intermediate resistance to vancomycin-intermediate resistance.</title>
        <authorList>
            <person name="Neoh H.-M."/>
            <person name="Cui L."/>
            <person name="Yuzawa H."/>
            <person name="Takeuchi F."/>
            <person name="Matsuo M."/>
            <person name="Hiramatsu K."/>
        </authorList>
    </citation>
    <scope>NUCLEOTIDE SEQUENCE [LARGE SCALE GENOMIC DNA]</scope>
    <source>
        <strain>Mu3 / ATCC 700698</strain>
    </source>
</reference>
<comment type="function">
    <text evidence="1">Catalyzes the initial step of the lipid cycle reactions in the biosynthesis of the cell wall peptidoglycan: transfers peptidoglycan precursor phospho-MurNAc-pentapeptide from UDP-MurNAc-pentapeptide onto the lipid carrier undecaprenyl phosphate, yielding undecaprenyl-pyrophosphoryl-MurNAc-pentapeptide, known as lipid I.</text>
</comment>
<comment type="catalytic activity">
    <reaction evidence="1">
        <text>UDP-N-acetyl-alpha-D-muramoyl-L-alanyl-gamma-D-glutamyl-L-lysyl-D-alanyl-D-alanine + di-trans,octa-cis-undecaprenyl phosphate = Mur2Ac(oyl-L-Ala-gamma-D-Glu-L-Lys-D-Ala-D-Ala)-di-trans,octa-cis-undecaprenyl diphosphate + UMP</text>
        <dbReference type="Rhea" id="RHEA:21920"/>
        <dbReference type="ChEBI" id="CHEBI:57865"/>
        <dbReference type="ChEBI" id="CHEBI:60032"/>
        <dbReference type="ChEBI" id="CHEBI:60392"/>
        <dbReference type="ChEBI" id="CHEBI:70758"/>
        <dbReference type="EC" id="2.7.8.13"/>
    </reaction>
</comment>
<comment type="cofactor">
    <cofactor evidence="1">
        <name>Mg(2+)</name>
        <dbReference type="ChEBI" id="CHEBI:18420"/>
    </cofactor>
</comment>
<comment type="pathway">
    <text evidence="1">Cell wall biogenesis; peptidoglycan biosynthesis.</text>
</comment>
<comment type="subcellular location">
    <subcellularLocation>
        <location evidence="1">Cell membrane</location>
        <topology evidence="1">Multi-pass membrane protein</topology>
    </subcellularLocation>
</comment>
<comment type="similarity">
    <text evidence="1">Belongs to the glycosyltransferase 4 family. MraY subfamily.</text>
</comment>
<name>MRAY_STAA1</name>
<feature type="chain" id="PRO_1000003071" description="Phospho-N-acetylmuramoyl-pentapeptide-transferase">
    <location>
        <begin position="1"/>
        <end position="321"/>
    </location>
</feature>
<feature type="transmembrane region" description="Helical" evidence="1">
    <location>
        <begin position="1"/>
        <end position="21"/>
    </location>
</feature>
<feature type="transmembrane region" description="Helical" evidence="1">
    <location>
        <begin position="50"/>
        <end position="70"/>
    </location>
</feature>
<feature type="transmembrane region" description="Helical" evidence="1">
    <location>
        <begin position="76"/>
        <end position="96"/>
    </location>
</feature>
<feature type="transmembrane region" description="Helical" evidence="1">
    <location>
        <begin position="112"/>
        <end position="132"/>
    </location>
</feature>
<feature type="transmembrane region" description="Helical" evidence="1">
    <location>
        <begin position="140"/>
        <end position="160"/>
    </location>
</feature>
<feature type="transmembrane region" description="Helical" evidence="1">
    <location>
        <begin position="176"/>
        <end position="196"/>
    </location>
</feature>
<feature type="transmembrane region" description="Helical" evidence="1">
    <location>
        <begin position="200"/>
        <end position="220"/>
    </location>
</feature>
<feature type="transmembrane region" description="Helical" evidence="1">
    <location>
        <begin position="225"/>
        <end position="245"/>
    </location>
</feature>
<feature type="transmembrane region" description="Helical" evidence="1">
    <location>
        <begin position="250"/>
        <end position="270"/>
    </location>
</feature>
<feature type="transmembrane region" description="Helical" evidence="1">
    <location>
        <begin position="300"/>
        <end position="320"/>
    </location>
</feature>
<protein>
    <recommendedName>
        <fullName evidence="1">Phospho-N-acetylmuramoyl-pentapeptide-transferase</fullName>
        <ecNumber evidence="1">2.7.8.13</ecNumber>
    </recommendedName>
    <alternativeName>
        <fullName evidence="1">UDP-MurNAc-pentapeptide phosphotransferase</fullName>
    </alternativeName>
</protein>
<keyword id="KW-0131">Cell cycle</keyword>
<keyword id="KW-0132">Cell division</keyword>
<keyword id="KW-1003">Cell membrane</keyword>
<keyword id="KW-0133">Cell shape</keyword>
<keyword id="KW-0961">Cell wall biogenesis/degradation</keyword>
<keyword id="KW-0460">Magnesium</keyword>
<keyword id="KW-0472">Membrane</keyword>
<keyword id="KW-0479">Metal-binding</keyword>
<keyword id="KW-0573">Peptidoglycan synthesis</keyword>
<keyword id="KW-0808">Transferase</keyword>
<keyword id="KW-0812">Transmembrane</keyword>
<keyword id="KW-1133">Transmembrane helix</keyword>